<protein>
    <recommendedName>
        <fullName evidence="2">Elongation factor Tu</fullName>
        <shortName evidence="2">EF-Tu</shortName>
        <ecNumber evidence="2">3.6.5.3</ecNumber>
    </recommendedName>
</protein>
<reference key="1">
    <citation type="journal article" date="2007" name="Proc. Natl. Acad. Sci. U.S.A.">
        <title>Genome sequencing reveals complex secondary metabolome in the marine actinomycete Salinispora tropica.</title>
        <authorList>
            <person name="Udwary D.W."/>
            <person name="Zeigler L."/>
            <person name="Asolkar R.N."/>
            <person name="Singan V."/>
            <person name="Lapidus A."/>
            <person name="Fenical W."/>
            <person name="Jensen P.R."/>
            <person name="Moore B.S."/>
        </authorList>
    </citation>
    <scope>NUCLEOTIDE SEQUENCE [LARGE SCALE GENOMIC DNA]</scope>
    <source>
        <strain>ATCC BAA-916 / DSM 44818 / JCM 13857 / NBRC 105044 / CNB-440</strain>
    </source>
</reference>
<accession>A4XBP8</accession>
<feature type="chain" id="PRO_1000076110" description="Elongation factor Tu">
    <location>
        <begin position="1"/>
        <end position="397"/>
    </location>
</feature>
<feature type="domain" description="tr-type G">
    <location>
        <begin position="10"/>
        <end position="206"/>
    </location>
</feature>
<feature type="region of interest" description="G1" evidence="1">
    <location>
        <begin position="19"/>
        <end position="26"/>
    </location>
</feature>
<feature type="region of interest" description="G2" evidence="1">
    <location>
        <begin position="62"/>
        <end position="66"/>
    </location>
</feature>
<feature type="region of interest" description="G3" evidence="1">
    <location>
        <begin position="83"/>
        <end position="86"/>
    </location>
</feature>
<feature type="region of interest" description="G4" evidence="1">
    <location>
        <begin position="138"/>
        <end position="141"/>
    </location>
</feature>
<feature type="region of interest" description="G5" evidence="1">
    <location>
        <begin position="176"/>
        <end position="178"/>
    </location>
</feature>
<feature type="binding site" evidence="2">
    <location>
        <begin position="19"/>
        <end position="26"/>
    </location>
    <ligand>
        <name>GTP</name>
        <dbReference type="ChEBI" id="CHEBI:37565"/>
    </ligand>
</feature>
<feature type="binding site" evidence="2">
    <location>
        <position position="26"/>
    </location>
    <ligand>
        <name>Mg(2+)</name>
        <dbReference type="ChEBI" id="CHEBI:18420"/>
    </ligand>
</feature>
<feature type="binding site" evidence="2">
    <location>
        <begin position="83"/>
        <end position="87"/>
    </location>
    <ligand>
        <name>GTP</name>
        <dbReference type="ChEBI" id="CHEBI:37565"/>
    </ligand>
</feature>
<feature type="binding site" evidence="2">
    <location>
        <begin position="138"/>
        <end position="141"/>
    </location>
    <ligand>
        <name>GTP</name>
        <dbReference type="ChEBI" id="CHEBI:37565"/>
    </ligand>
</feature>
<gene>
    <name evidence="2" type="primary">tuf</name>
    <name type="ordered locus">Strop_3925</name>
</gene>
<comment type="function">
    <text evidence="2">GTP hydrolase that promotes the GTP-dependent binding of aminoacyl-tRNA to the A-site of ribosomes during protein biosynthesis.</text>
</comment>
<comment type="catalytic activity">
    <reaction evidence="2">
        <text>GTP + H2O = GDP + phosphate + H(+)</text>
        <dbReference type="Rhea" id="RHEA:19669"/>
        <dbReference type="ChEBI" id="CHEBI:15377"/>
        <dbReference type="ChEBI" id="CHEBI:15378"/>
        <dbReference type="ChEBI" id="CHEBI:37565"/>
        <dbReference type="ChEBI" id="CHEBI:43474"/>
        <dbReference type="ChEBI" id="CHEBI:58189"/>
        <dbReference type="EC" id="3.6.5.3"/>
    </reaction>
    <physiologicalReaction direction="left-to-right" evidence="2">
        <dbReference type="Rhea" id="RHEA:19670"/>
    </physiologicalReaction>
</comment>
<comment type="subunit">
    <text evidence="2">Monomer.</text>
</comment>
<comment type="subcellular location">
    <subcellularLocation>
        <location evidence="2">Cytoplasm</location>
    </subcellularLocation>
</comment>
<comment type="similarity">
    <text evidence="2">Belongs to the TRAFAC class translation factor GTPase superfamily. Classic translation factor GTPase family. EF-Tu/EF-1A subfamily.</text>
</comment>
<proteinExistence type="inferred from homology"/>
<evidence type="ECO:0000250" key="1"/>
<evidence type="ECO:0000255" key="2">
    <source>
        <dbReference type="HAMAP-Rule" id="MF_00118"/>
    </source>
</evidence>
<organism>
    <name type="scientific">Salinispora tropica (strain ATCC BAA-916 / DSM 44818 / JCM 13857 / NBRC 105044 / CNB-440)</name>
    <dbReference type="NCBI Taxonomy" id="369723"/>
    <lineage>
        <taxon>Bacteria</taxon>
        <taxon>Bacillati</taxon>
        <taxon>Actinomycetota</taxon>
        <taxon>Actinomycetes</taxon>
        <taxon>Micromonosporales</taxon>
        <taxon>Micromonosporaceae</taxon>
        <taxon>Salinispora</taxon>
    </lineage>
</organism>
<dbReference type="EC" id="3.6.5.3" evidence="2"/>
<dbReference type="EMBL" id="CP000667">
    <property type="protein sequence ID" value="ABP56355.1"/>
    <property type="molecule type" value="Genomic_DNA"/>
</dbReference>
<dbReference type="RefSeq" id="WP_012015126.1">
    <property type="nucleotide sequence ID" value="NC_009380.1"/>
</dbReference>
<dbReference type="SMR" id="A4XBP8"/>
<dbReference type="STRING" id="369723.Strop_3925"/>
<dbReference type="KEGG" id="stp:Strop_3925"/>
<dbReference type="PATRIC" id="fig|369723.5.peg.4051"/>
<dbReference type="eggNOG" id="COG0050">
    <property type="taxonomic scope" value="Bacteria"/>
</dbReference>
<dbReference type="HOGENOM" id="CLU_007265_0_1_11"/>
<dbReference type="Proteomes" id="UP000000235">
    <property type="component" value="Chromosome"/>
</dbReference>
<dbReference type="GO" id="GO:0005829">
    <property type="term" value="C:cytosol"/>
    <property type="evidence" value="ECO:0007669"/>
    <property type="project" value="TreeGrafter"/>
</dbReference>
<dbReference type="GO" id="GO:0005525">
    <property type="term" value="F:GTP binding"/>
    <property type="evidence" value="ECO:0007669"/>
    <property type="project" value="UniProtKB-UniRule"/>
</dbReference>
<dbReference type="GO" id="GO:0003924">
    <property type="term" value="F:GTPase activity"/>
    <property type="evidence" value="ECO:0007669"/>
    <property type="project" value="InterPro"/>
</dbReference>
<dbReference type="GO" id="GO:0003746">
    <property type="term" value="F:translation elongation factor activity"/>
    <property type="evidence" value="ECO:0007669"/>
    <property type="project" value="UniProtKB-UniRule"/>
</dbReference>
<dbReference type="CDD" id="cd01884">
    <property type="entry name" value="EF_Tu"/>
    <property type="match status" value="1"/>
</dbReference>
<dbReference type="CDD" id="cd03697">
    <property type="entry name" value="EFTU_II"/>
    <property type="match status" value="1"/>
</dbReference>
<dbReference type="CDD" id="cd03707">
    <property type="entry name" value="EFTU_III"/>
    <property type="match status" value="1"/>
</dbReference>
<dbReference type="FunFam" id="2.40.30.10:FF:000001">
    <property type="entry name" value="Elongation factor Tu"/>
    <property type="match status" value="1"/>
</dbReference>
<dbReference type="FunFam" id="3.40.50.300:FF:000003">
    <property type="entry name" value="Elongation factor Tu"/>
    <property type="match status" value="1"/>
</dbReference>
<dbReference type="Gene3D" id="3.40.50.300">
    <property type="entry name" value="P-loop containing nucleotide triphosphate hydrolases"/>
    <property type="match status" value="1"/>
</dbReference>
<dbReference type="Gene3D" id="2.40.30.10">
    <property type="entry name" value="Translation factors"/>
    <property type="match status" value="2"/>
</dbReference>
<dbReference type="HAMAP" id="MF_00118_B">
    <property type="entry name" value="EF_Tu_B"/>
    <property type="match status" value="1"/>
</dbReference>
<dbReference type="InterPro" id="IPR041709">
    <property type="entry name" value="EF-Tu_GTP-bd"/>
</dbReference>
<dbReference type="InterPro" id="IPR050055">
    <property type="entry name" value="EF-Tu_GTPase"/>
</dbReference>
<dbReference type="InterPro" id="IPR004161">
    <property type="entry name" value="EFTu-like_2"/>
</dbReference>
<dbReference type="InterPro" id="IPR033720">
    <property type="entry name" value="EFTU_2"/>
</dbReference>
<dbReference type="InterPro" id="IPR031157">
    <property type="entry name" value="G_TR_CS"/>
</dbReference>
<dbReference type="InterPro" id="IPR027417">
    <property type="entry name" value="P-loop_NTPase"/>
</dbReference>
<dbReference type="InterPro" id="IPR005225">
    <property type="entry name" value="Small_GTP-bd"/>
</dbReference>
<dbReference type="InterPro" id="IPR000795">
    <property type="entry name" value="T_Tr_GTP-bd_dom"/>
</dbReference>
<dbReference type="InterPro" id="IPR009000">
    <property type="entry name" value="Transl_B-barrel_sf"/>
</dbReference>
<dbReference type="InterPro" id="IPR009001">
    <property type="entry name" value="Transl_elong_EF1A/Init_IF2_C"/>
</dbReference>
<dbReference type="InterPro" id="IPR004541">
    <property type="entry name" value="Transl_elong_EFTu/EF1A_bac/org"/>
</dbReference>
<dbReference type="InterPro" id="IPR004160">
    <property type="entry name" value="Transl_elong_EFTu/EF1A_C"/>
</dbReference>
<dbReference type="NCBIfam" id="TIGR00485">
    <property type="entry name" value="EF-Tu"/>
    <property type="match status" value="1"/>
</dbReference>
<dbReference type="NCBIfam" id="NF000766">
    <property type="entry name" value="PRK00049.1"/>
    <property type="match status" value="1"/>
</dbReference>
<dbReference type="NCBIfam" id="NF009372">
    <property type="entry name" value="PRK12735.1"/>
    <property type="match status" value="1"/>
</dbReference>
<dbReference type="NCBIfam" id="NF009373">
    <property type="entry name" value="PRK12736.1"/>
    <property type="match status" value="1"/>
</dbReference>
<dbReference type="NCBIfam" id="TIGR00231">
    <property type="entry name" value="small_GTP"/>
    <property type="match status" value="1"/>
</dbReference>
<dbReference type="PANTHER" id="PTHR43721:SF22">
    <property type="entry name" value="ELONGATION FACTOR TU, MITOCHONDRIAL"/>
    <property type="match status" value="1"/>
</dbReference>
<dbReference type="PANTHER" id="PTHR43721">
    <property type="entry name" value="ELONGATION FACTOR TU-RELATED"/>
    <property type="match status" value="1"/>
</dbReference>
<dbReference type="Pfam" id="PF00009">
    <property type="entry name" value="GTP_EFTU"/>
    <property type="match status" value="1"/>
</dbReference>
<dbReference type="Pfam" id="PF03144">
    <property type="entry name" value="GTP_EFTU_D2"/>
    <property type="match status" value="1"/>
</dbReference>
<dbReference type="Pfam" id="PF03143">
    <property type="entry name" value="GTP_EFTU_D3"/>
    <property type="match status" value="1"/>
</dbReference>
<dbReference type="PRINTS" id="PR00315">
    <property type="entry name" value="ELONGATNFCT"/>
</dbReference>
<dbReference type="SUPFAM" id="SSF50465">
    <property type="entry name" value="EF-Tu/eEF-1alpha/eIF2-gamma C-terminal domain"/>
    <property type="match status" value="1"/>
</dbReference>
<dbReference type="SUPFAM" id="SSF52540">
    <property type="entry name" value="P-loop containing nucleoside triphosphate hydrolases"/>
    <property type="match status" value="1"/>
</dbReference>
<dbReference type="SUPFAM" id="SSF50447">
    <property type="entry name" value="Translation proteins"/>
    <property type="match status" value="1"/>
</dbReference>
<dbReference type="PROSITE" id="PS00301">
    <property type="entry name" value="G_TR_1"/>
    <property type="match status" value="1"/>
</dbReference>
<dbReference type="PROSITE" id="PS51722">
    <property type="entry name" value="G_TR_2"/>
    <property type="match status" value="1"/>
</dbReference>
<name>EFTU_SALTO</name>
<keyword id="KW-0963">Cytoplasm</keyword>
<keyword id="KW-0251">Elongation factor</keyword>
<keyword id="KW-0342">GTP-binding</keyword>
<keyword id="KW-0378">Hydrolase</keyword>
<keyword id="KW-0460">Magnesium</keyword>
<keyword id="KW-0479">Metal-binding</keyword>
<keyword id="KW-0547">Nucleotide-binding</keyword>
<keyword id="KW-0648">Protein biosynthesis</keyword>
<keyword id="KW-1185">Reference proteome</keyword>
<sequence length="397" mass="43999">MAKAKFERTKPHVNIGTIGHIDHGKTTLTAAITKVLHDQYPDLNPYMPFDEIDKAPEEKARGITISIAHVEYQTEARHYAHVDCPGHADYIKNMITGAAQMDGAILVVAATDGPMPQTREHVLLARQVGVPYIVVALNKSDMVDDEELLELVELEVRELLSSQEYPGDDLPVVRVSALKALEGDPEWAGKLMELMTAVDTSIPQPEREIEKPFLMPIEDVFTITGRGTVVTGRAERGVLKPNEEVELVGIREKSTKTTCTGIEMFRKLLDEARAGENVGLLLRGVKREDVERGMVVIKPGTATPHTEFEATVYILSKEEGGRHTPFFQNYRPQFYFRTTDVTGVVTLPEGTEMVMPGDNTTMTVKLIQPIAMEDNLKFAIREGGRTVGAGRVTKIIK</sequence>